<keyword id="KW-0028">Amino-acid biosynthesis</keyword>
<keyword id="KW-0963">Cytoplasm</keyword>
<keyword id="KW-0368">Histidine biosynthesis</keyword>
<keyword id="KW-0413">Isomerase</keyword>
<keyword id="KW-1185">Reference proteome</keyword>
<evidence type="ECO:0000255" key="1">
    <source>
        <dbReference type="HAMAP-Rule" id="MF_01014"/>
    </source>
</evidence>
<protein>
    <recommendedName>
        <fullName evidence="1">1-(5-phosphoribosyl)-5-[(5-phosphoribosylamino)methylideneamino] imidazole-4-carboxamide isomerase</fullName>
        <ecNumber evidence="1">5.3.1.16</ecNumber>
    </recommendedName>
    <alternativeName>
        <fullName evidence="1">Phosphoribosylformimino-5-aminoimidazole carboxamide ribotide isomerase</fullName>
    </alternativeName>
</protein>
<comment type="catalytic activity">
    <reaction evidence="1">
        <text>1-(5-phospho-beta-D-ribosyl)-5-[(5-phospho-beta-D-ribosylamino)methylideneamino]imidazole-4-carboxamide = 5-[(5-phospho-1-deoxy-D-ribulos-1-ylimino)methylamino]-1-(5-phospho-beta-D-ribosyl)imidazole-4-carboxamide</text>
        <dbReference type="Rhea" id="RHEA:15469"/>
        <dbReference type="ChEBI" id="CHEBI:58435"/>
        <dbReference type="ChEBI" id="CHEBI:58525"/>
        <dbReference type="EC" id="5.3.1.16"/>
    </reaction>
</comment>
<comment type="pathway">
    <text evidence="1">Amino-acid biosynthesis; L-histidine biosynthesis; L-histidine from 5-phospho-alpha-D-ribose 1-diphosphate: step 4/9.</text>
</comment>
<comment type="subcellular location">
    <subcellularLocation>
        <location evidence="1">Cytoplasm</location>
    </subcellularLocation>
</comment>
<comment type="similarity">
    <text evidence="1">Belongs to the HisA/HisF family.</text>
</comment>
<feature type="chain" id="PRO_0000290517" description="1-(5-phosphoribosyl)-5-[(5-phosphoribosylamino)methylideneamino] imidazole-4-carboxamide isomerase">
    <location>
        <begin position="1"/>
        <end position="248"/>
    </location>
</feature>
<feature type="active site" description="Proton acceptor" evidence="1">
    <location>
        <position position="8"/>
    </location>
</feature>
<feature type="active site" description="Proton donor" evidence="1">
    <location>
        <position position="131"/>
    </location>
</feature>
<proteinExistence type="inferred from homology"/>
<dbReference type="EC" id="5.3.1.16" evidence="1"/>
<dbReference type="EMBL" id="AM260479">
    <property type="protein sequence ID" value="CAJ94479.1"/>
    <property type="molecule type" value="Genomic_DNA"/>
</dbReference>
<dbReference type="RefSeq" id="WP_010812327.1">
    <property type="nucleotide sequence ID" value="NZ_CP039287.1"/>
</dbReference>
<dbReference type="SMR" id="Q0K692"/>
<dbReference type="STRING" id="381666.H16_A3411"/>
<dbReference type="GeneID" id="34308607"/>
<dbReference type="KEGG" id="reh:H16_A3411"/>
<dbReference type="eggNOG" id="COG0106">
    <property type="taxonomic scope" value="Bacteria"/>
</dbReference>
<dbReference type="HOGENOM" id="CLU_048577_1_1_4"/>
<dbReference type="OrthoDB" id="9807749at2"/>
<dbReference type="UniPathway" id="UPA00031">
    <property type="reaction ID" value="UER00009"/>
</dbReference>
<dbReference type="Proteomes" id="UP000008210">
    <property type="component" value="Chromosome 1"/>
</dbReference>
<dbReference type="GO" id="GO:0005737">
    <property type="term" value="C:cytoplasm"/>
    <property type="evidence" value="ECO:0007669"/>
    <property type="project" value="UniProtKB-SubCell"/>
</dbReference>
<dbReference type="GO" id="GO:0003949">
    <property type="term" value="F:1-(5-phosphoribosyl)-5-[(5-phosphoribosylamino)methylideneamino]imidazole-4-carboxamide isomerase activity"/>
    <property type="evidence" value="ECO:0007669"/>
    <property type="project" value="UniProtKB-UniRule"/>
</dbReference>
<dbReference type="GO" id="GO:0000105">
    <property type="term" value="P:L-histidine biosynthetic process"/>
    <property type="evidence" value="ECO:0007669"/>
    <property type="project" value="UniProtKB-UniRule"/>
</dbReference>
<dbReference type="GO" id="GO:0000162">
    <property type="term" value="P:L-tryptophan biosynthetic process"/>
    <property type="evidence" value="ECO:0007669"/>
    <property type="project" value="TreeGrafter"/>
</dbReference>
<dbReference type="CDD" id="cd04732">
    <property type="entry name" value="HisA"/>
    <property type="match status" value="1"/>
</dbReference>
<dbReference type="FunFam" id="3.20.20.70:FF:000009">
    <property type="entry name" value="1-(5-phosphoribosyl)-5-[(5-phosphoribosylamino)methylideneamino] imidazole-4-carboxamide isomerase"/>
    <property type="match status" value="1"/>
</dbReference>
<dbReference type="Gene3D" id="3.20.20.70">
    <property type="entry name" value="Aldolase class I"/>
    <property type="match status" value="1"/>
</dbReference>
<dbReference type="HAMAP" id="MF_01014">
    <property type="entry name" value="HisA"/>
    <property type="match status" value="1"/>
</dbReference>
<dbReference type="InterPro" id="IPR013785">
    <property type="entry name" value="Aldolase_TIM"/>
</dbReference>
<dbReference type="InterPro" id="IPR006062">
    <property type="entry name" value="His_biosynth"/>
</dbReference>
<dbReference type="InterPro" id="IPR006063">
    <property type="entry name" value="HisA_bact_arch"/>
</dbReference>
<dbReference type="InterPro" id="IPR044524">
    <property type="entry name" value="Isoase_HisA-like"/>
</dbReference>
<dbReference type="InterPro" id="IPR023016">
    <property type="entry name" value="Isoase_HisA-like_bact"/>
</dbReference>
<dbReference type="InterPro" id="IPR011060">
    <property type="entry name" value="RibuloseP-bd_barrel"/>
</dbReference>
<dbReference type="NCBIfam" id="TIGR00007">
    <property type="entry name" value="1-(5-phosphoribosyl)-5-[(5-phosphoribosylamino)methylideneamino]imidazole-4-carboxamide isomerase"/>
    <property type="match status" value="1"/>
</dbReference>
<dbReference type="NCBIfam" id="NF010112">
    <property type="entry name" value="PRK13585.1"/>
    <property type="match status" value="1"/>
</dbReference>
<dbReference type="PANTHER" id="PTHR43090">
    <property type="entry name" value="1-(5-PHOSPHORIBOSYL)-5-[(5-PHOSPHORIBOSYLAMINO)METHYLIDENEAMINO] IMIDAZOLE-4-CARBOXAMIDE ISOMERASE"/>
    <property type="match status" value="1"/>
</dbReference>
<dbReference type="PANTHER" id="PTHR43090:SF2">
    <property type="entry name" value="1-(5-PHOSPHORIBOSYL)-5-[(5-PHOSPHORIBOSYLAMINO)METHYLIDENEAMINO] IMIDAZOLE-4-CARBOXAMIDE ISOMERASE"/>
    <property type="match status" value="1"/>
</dbReference>
<dbReference type="Pfam" id="PF00977">
    <property type="entry name" value="His_biosynth"/>
    <property type="match status" value="1"/>
</dbReference>
<dbReference type="SUPFAM" id="SSF51366">
    <property type="entry name" value="Ribulose-phoshate binding barrel"/>
    <property type="match status" value="1"/>
</dbReference>
<accession>Q0K692</accession>
<sequence length="248" mass="26331">MLLIPAIDLKDGQCVRLKQGDMDQATVFSEDPAAMARHWVEQGARRLHLVDLNGAFVGKPRNEEAIKAIIAEVGDEIPVQLGGGIRDLNTIERWLDDGLSYVIIGTAAVKNPGFLKDACSAFGGHIIVGLDARDGKVATDGWSKLTGHEVADLARKYEDYGVEAIIYTDIGRDGMLQGINIDATVKLAQSMSIPVIASGGLSNLADIDNLCAVEGEGVEGVICGRAIYSGDLNFAAAQALADKLRDGQ</sequence>
<gene>
    <name evidence="1" type="primary">hisA</name>
    <name type="ordered locus">H16_A3411</name>
</gene>
<reference key="1">
    <citation type="journal article" date="2006" name="Nat. Biotechnol.">
        <title>Genome sequence of the bioplastic-producing 'Knallgas' bacterium Ralstonia eutropha H16.</title>
        <authorList>
            <person name="Pohlmann A."/>
            <person name="Fricke W.F."/>
            <person name="Reinecke F."/>
            <person name="Kusian B."/>
            <person name="Liesegang H."/>
            <person name="Cramm R."/>
            <person name="Eitinger T."/>
            <person name="Ewering C."/>
            <person name="Poetter M."/>
            <person name="Schwartz E."/>
            <person name="Strittmatter A."/>
            <person name="Voss I."/>
            <person name="Gottschalk G."/>
            <person name="Steinbuechel A."/>
            <person name="Friedrich B."/>
            <person name="Bowien B."/>
        </authorList>
    </citation>
    <scope>NUCLEOTIDE SEQUENCE [LARGE SCALE GENOMIC DNA]</scope>
    <source>
        <strain>ATCC 17699 / DSM 428 / KCTC 22496 / NCIMB 10442 / H16 / Stanier 337</strain>
    </source>
</reference>
<organism>
    <name type="scientific">Cupriavidus necator (strain ATCC 17699 / DSM 428 / KCTC 22496 / NCIMB 10442 / H16 / Stanier 337)</name>
    <name type="common">Ralstonia eutropha</name>
    <dbReference type="NCBI Taxonomy" id="381666"/>
    <lineage>
        <taxon>Bacteria</taxon>
        <taxon>Pseudomonadati</taxon>
        <taxon>Pseudomonadota</taxon>
        <taxon>Betaproteobacteria</taxon>
        <taxon>Burkholderiales</taxon>
        <taxon>Burkholderiaceae</taxon>
        <taxon>Cupriavidus</taxon>
    </lineage>
</organism>
<name>HIS4_CUPNH</name>